<name>ACTP_ECO5E</name>
<comment type="function">
    <text evidence="1">Transports acetate.</text>
</comment>
<comment type="subcellular location">
    <subcellularLocation>
        <location evidence="1">Cell inner membrane</location>
        <topology evidence="1">Multi-pass membrane protein</topology>
    </subcellularLocation>
</comment>
<comment type="similarity">
    <text evidence="1">Belongs to the sodium:solute symporter (SSF) (TC 2.A.21) family.</text>
</comment>
<reference key="1">
    <citation type="journal article" date="2011" name="Proc. Natl. Acad. Sci. U.S.A.">
        <title>Genomic anatomy of Escherichia coli O157:H7 outbreaks.</title>
        <authorList>
            <person name="Eppinger M."/>
            <person name="Mammel M.K."/>
            <person name="Leclerc J.E."/>
            <person name="Ravel J."/>
            <person name="Cebula T.A."/>
        </authorList>
    </citation>
    <scope>NUCLEOTIDE SEQUENCE [LARGE SCALE GENOMIC DNA]</scope>
    <source>
        <strain>EC4115 / EHEC</strain>
    </source>
</reference>
<gene>
    <name evidence="1" type="primary">actP</name>
    <name type="ordered locus">ECH74115_5572</name>
</gene>
<evidence type="ECO:0000255" key="1">
    <source>
        <dbReference type="HAMAP-Rule" id="MF_01426"/>
    </source>
</evidence>
<feature type="chain" id="PRO_1000145712" description="Cation/acetate symporter ActP">
    <location>
        <begin position="1"/>
        <end position="549"/>
    </location>
</feature>
<feature type="transmembrane region" description="Helical" evidence="1">
    <location>
        <begin position="33"/>
        <end position="53"/>
    </location>
</feature>
<feature type="transmembrane region" description="Helical" evidence="1">
    <location>
        <begin position="77"/>
        <end position="97"/>
    </location>
</feature>
<feature type="transmembrane region" description="Helical" evidence="1">
    <location>
        <begin position="103"/>
        <end position="123"/>
    </location>
</feature>
<feature type="transmembrane region" description="Helical" evidence="1">
    <location>
        <begin position="148"/>
        <end position="168"/>
    </location>
</feature>
<feature type="transmembrane region" description="Helical" evidence="1">
    <location>
        <begin position="183"/>
        <end position="203"/>
    </location>
</feature>
<feature type="transmembrane region" description="Helical" evidence="1">
    <location>
        <begin position="206"/>
        <end position="226"/>
    </location>
</feature>
<feature type="transmembrane region" description="Helical" evidence="1">
    <location>
        <begin position="262"/>
        <end position="282"/>
    </location>
</feature>
<feature type="transmembrane region" description="Helical" evidence="1">
    <location>
        <begin position="303"/>
        <end position="323"/>
    </location>
</feature>
<feature type="transmembrane region" description="Helical" evidence="1">
    <location>
        <begin position="355"/>
        <end position="375"/>
    </location>
</feature>
<feature type="transmembrane region" description="Helical" evidence="1">
    <location>
        <begin position="404"/>
        <end position="424"/>
    </location>
</feature>
<feature type="transmembrane region" description="Helical" evidence="1">
    <location>
        <begin position="428"/>
        <end position="448"/>
    </location>
</feature>
<feature type="transmembrane region" description="Helical" evidence="1">
    <location>
        <begin position="464"/>
        <end position="484"/>
    </location>
</feature>
<feature type="transmembrane region" description="Helical" evidence="1">
    <location>
        <begin position="493"/>
        <end position="513"/>
    </location>
</feature>
<organism>
    <name type="scientific">Escherichia coli O157:H7 (strain EC4115 / EHEC)</name>
    <dbReference type="NCBI Taxonomy" id="444450"/>
    <lineage>
        <taxon>Bacteria</taxon>
        <taxon>Pseudomonadati</taxon>
        <taxon>Pseudomonadota</taxon>
        <taxon>Gammaproteobacteria</taxon>
        <taxon>Enterobacterales</taxon>
        <taxon>Enterobacteriaceae</taxon>
        <taxon>Escherichia</taxon>
    </lineage>
</organism>
<dbReference type="EMBL" id="CP001164">
    <property type="protein sequence ID" value="ACI37386.1"/>
    <property type="molecule type" value="Genomic_DNA"/>
</dbReference>
<dbReference type="RefSeq" id="WP_000832551.1">
    <property type="nucleotide sequence ID" value="NC_011353.1"/>
</dbReference>
<dbReference type="SMR" id="B5Z1C8"/>
<dbReference type="GeneID" id="75059115"/>
<dbReference type="KEGG" id="ecf:ECH74115_5572"/>
<dbReference type="HOGENOM" id="CLU_018808_8_3_6"/>
<dbReference type="GO" id="GO:0005886">
    <property type="term" value="C:plasma membrane"/>
    <property type="evidence" value="ECO:0007669"/>
    <property type="project" value="UniProtKB-SubCell"/>
</dbReference>
<dbReference type="GO" id="GO:0015123">
    <property type="term" value="F:acetate transmembrane transporter activity"/>
    <property type="evidence" value="ECO:0007669"/>
    <property type="project" value="UniProtKB-UniRule"/>
</dbReference>
<dbReference type="GO" id="GO:0043879">
    <property type="term" value="F:glycolate transmembrane transporter activity"/>
    <property type="evidence" value="ECO:0007669"/>
    <property type="project" value="InterPro"/>
</dbReference>
<dbReference type="GO" id="GO:0015293">
    <property type="term" value="F:symporter activity"/>
    <property type="evidence" value="ECO:0007669"/>
    <property type="project" value="UniProtKB-KW"/>
</dbReference>
<dbReference type="GO" id="GO:0006847">
    <property type="term" value="P:plasma membrane acetate transport"/>
    <property type="evidence" value="ECO:0007669"/>
    <property type="project" value="TreeGrafter"/>
</dbReference>
<dbReference type="GO" id="GO:0006814">
    <property type="term" value="P:sodium ion transport"/>
    <property type="evidence" value="ECO:0007669"/>
    <property type="project" value="UniProtKB-KW"/>
</dbReference>
<dbReference type="CDD" id="cd11480">
    <property type="entry name" value="SLC5sbd_u4"/>
    <property type="match status" value="1"/>
</dbReference>
<dbReference type="FunFam" id="1.20.1730.10:FF:000001">
    <property type="entry name" value="Cation/acetate symporter ActP"/>
    <property type="match status" value="1"/>
</dbReference>
<dbReference type="Gene3D" id="1.20.1730.10">
    <property type="entry name" value="Sodium/glucose cotransporter"/>
    <property type="match status" value="1"/>
</dbReference>
<dbReference type="HAMAP" id="MF_01426">
    <property type="entry name" value="Acet_symport_ActP"/>
    <property type="match status" value="1"/>
</dbReference>
<dbReference type="InterPro" id="IPR014083">
    <property type="entry name" value="Cation/Ac_symporter_ActP"/>
</dbReference>
<dbReference type="InterPro" id="IPR038377">
    <property type="entry name" value="Na/Glc_symporter_sf"/>
</dbReference>
<dbReference type="InterPro" id="IPR001734">
    <property type="entry name" value="Na/solute_symporter"/>
</dbReference>
<dbReference type="InterPro" id="IPR018212">
    <property type="entry name" value="Na/solute_symporter_CS"/>
</dbReference>
<dbReference type="InterPro" id="IPR050277">
    <property type="entry name" value="Sodium:Solute_Symporter"/>
</dbReference>
<dbReference type="NCBIfam" id="NF006903">
    <property type="entry name" value="PRK09395.1"/>
    <property type="match status" value="1"/>
</dbReference>
<dbReference type="NCBIfam" id="NF009135">
    <property type="entry name" value="PRK12488.1"/>
    <property type="match status" value="1"/>
</dbReference>
<dbReference type="NCBIfam" id="TIGR00813">
    <property type="entry name" value="sss"/>
    <property type="match status" value="1"/>
</dbReference>
<dbReference type="NCBIfam" id="TIGR02711">
    <property type="entry name" value="symport_actP"/>
    <property type="match status" value="1"/>
</dbReference>
<dbReference type="PANTHER" id="PTHR48086:SF6">
    <property type="entry name" value="CATION_ACETATE SYMPORTER ACTP"/>
    <property type="match status" value="1"/>
</dbReference>
<dbReference type="PANTHER" id="PTHR48086">
    <property type="entry name" value="SODIUM/PROLINE SYMPORTER-RELATED"/>
    <property type="match status" value="1"/>
</dbReference>
<dbReference type="Pfam" id="PF00474">
    <property type="entry name" value="SSF"/>
    <property type="match status" value="1"/>
</dbReference>
<dbReference type="PROSITE" id="PS00456">
    <property type="entry name" value="NA_SOLUT_SYMP_1"/>
    <property type="match status" value="1"/>
</dbReference>
<dbReference type="PROSITE" id="PS00457">
    <property type="entry name" value="NA_SOLUT_SYMP_2"/>
    <property type="match status" value="1"/>
</dbReference>
<dbReference type="PROSITE" id="PS50283">
    <property type="entry name" value="NA_SOLUT_SYMP_3"/>
    <property type="match status" value="1"/>
</dbReference>
<keyword id="KW-0997">Cell inner membrane</keyword>
<keyword id="KW-1003">Cell membrane</keyword>
<keyword id="KW-0406">Ion transport</keyword>
<keyword id="KW-0472">Membrane</keyword>
<keyword id="KW-0915">Sodium</keyword>
<keyword id="KW-0739">Sodium transport</keyword>
<keyword id="KW-0769">Symport</keyword>
<keyword id="KW-0812">Transmembrane</keyword>
<keyword id="KW-1133">Transmembrane helix</keyword>
<keyword id="KW-0813">Transport</keyword>
<sequence length="549" mass="59224">MKRVLTALAATLPFAANAADAISGAVERQPTNWQAIIMFLIFVVFTLGITYWASKRVRSRNDYYTAGGNITGFQNGLAIAGDYMSAASFLGISALVFTSGYDGLIYSLGFLVGWPIILFLIAERLRNLGRYTFADVASYRLKQGPIRILSACGSLVVVALYLIAQMVGAGKLIELLFGLNYHIAVVLVGVLMMMYVLFGGMLATTWVQIIKAVLLLFGASFMAFMVMKHVGFSFNNLFSEAMAVHPKGVDIMKPGGLVKDPISALSLGLGLMFGTAGLPHILMRFFTVSDAREARKSVFYATGFMGYFYILTFIIGFGAIMLVGANPEYKDAAGHLIGGNNMAAVHLANAVGGNLFLGFISAVAFATILAVVAGLTLAGASAVSHDLYANVFKKGATEREELRVSKITVLILGVIAIILGVLFENQNIAFMVGLAFAIAASCNFPIILLSMYWSKLTTRGAMMGGWLGLITAVVLMILGPTIWVQILGHEKAIFPYEYPALFSITVAFLGIWFFSATDNSAEGARERELFRAQFIRSQTGFGVEQGRAH</sequence>
<protein>
    <recommendedName>
        <fullName evidence="1">Cation/acetate symporter ActP</fullName>
    </recommendedName>
    <alternativeName>
        <fullName evidence="1">Acetate permease</fullName>
    </alternativeName>
    <alternativeName>
        <fullName evidence="1">Acetate transporter ActP</fullName>
    </alternativeName>
</protein>
<proteinExistence type="inferred from homology"/>
<accession>B5Z1C8</accession>